<organism>
    <name type="scientific">Streptococcus pneumoniae serotype 19F (strain G54)</name>
    <dbReference type="NCBI Taxonomy" id="512566"/>
    <lineage>
        <taxon>Bacteria</taxon>
        <taxon>Bacillati</taxon>
        <taxon>Bacillota</taxon>
        <taxon>Bacilli</taxon>
        <taxon>Lactobacillales</taxon>
        <taxon>Streptococcaceae</taxon>
        <taxon>Streptococcus</taxon>
    </lineage>
</organism>
<evidence type="ECO:0000255" key="1">
    <source>
        <dbReference type="HAMAP-Rule" id="MF_00357"/>
    </source>
</evidence>
<evidence type="ECO:0000255" key="2">
    <source>
        <dbReference type="PROSITE-ProRule" id="PRU01261"/>
    </source>
</evidence>
<evidence type="ECO:0000256" key="3">
    <source>
        <dbReference type="SAM" id="MobiDB-lite"/>
    </source>
</evidence>
<proteinExistence type="inferred from homology"/>
<reference key="1">
    <citation type="journal article" date="2001" name="Microb. Drug Resist.">
        <title>Annotated draft genomic sequence from a Streptococcus pneumoniae type 19F clinical isolate.</title>
        <authorList>
            <person name="Dopazo J."/>
            <person name="Mendoza A."/>
            <person name="Herrero J."/>
            <person name="Caldara F."/>
            <person name="Humbert Y."/>
            <person name="Friedli L."/>
            <person name="Guerrier M."/>
            <person name="Grand-Schenk E."/>
            <person name="Gandin C."/>
            <person name="de Francesco M."/>
            <person name="Polissi A."/>
            <person name="Buell G."/>
            <person name="Feger G."/>
            <person name="Garcia E."/>
            <person name="Peitsch M."/>
            <person name="Garcia-Bustos J.F."/>
        </authorList>
    </citation>
    <scope>NUCLEOTIDE SEQUENCE [LARGE SCALE GENOMIC DNA]</scope>
    <source>
        <strain>G54</strain>
    </source>
</reference>
<reference key="2">
    <citation type="submission" date="2008-03" db="EMBL/GenBank/DDBJ databases">
        <title>Pneumococcal beta glucoside metabolism investigated by whole genome comparison.</title>
        <authorList>
            <person name="Mulas L."/>
            <person name="Trappetti C."/>
            <person name="Hakenbeck R."/>
            <person name="Iannelli F."/>
            <person name="Pozzi G."/>
            <person name="Davidsen T.M."/>
            <person name="Tettelin H."/>
            <person name="Oggioni M."/>
        </authorList>
    </citation>
    <scope>NUCLEOTIDE SEQUENCE [LARGE SCALE GENOMIC DNA]</scope>
    <source>
        <strain>G54</strain>
    </source>
</reference>
<protein>
    <recommendedName>
        <fullName evidence="1">Probable DNA-directed RNA polymerase subunit delta</fullName>
    </recommendedName>
    <alternativeName>
        <fullName evidence="1">RNAP delta factor</fullName>
    </alternativeName>
</protein>
<name>RPOE_STRP4</name>
<keyword id="KW-0240">DNA-directed RNA polymerase</keyword>
<keyword id="KW-0548">Nucleotidyltransferase</keyword>
<keyword id="KW-0804">Transcription</keyword>
<keyword id="KW-0808">Transferase</keyword>
<feature type="chain" id="PRO_1000120567" description="Probable DNA-directed RNA polymerase subunit delta">
    <location>
        <begin position="1"/>
        <end position="195"/>
    </location>
</feature>
<feature type="domain" description="HTH HARE-type" evidence="2">
    <location>
        <begin position="14"/>
        <end position="83"/>
    </location>
</feature>
<feature type="region of interest" description="Disordered" evidence="3">
    <location>
        <begin position="120"/>
        <end position="195"/>
    </location>
</feature>
<feature type="compositionally biased region" description="Acidic residues" evidence="3">
    <location>
        <begin position="120"/>
        <end position="138"/>
    </location>
</feature>
<feature type="compositionally biased region" description="Acidic residues" evidence="3">
    <location>
        <begin position="145"/>
        <end position="195"/>
    </location>
</feature>
<accession>B5E1U3</accession>
<comment type="function">
    <text evidence="1">Participates in both the initiation and recycling phases of transcription. In the presence of the delta subunit, RNAP displays an increased specificity of transcription, a decreased affinity for nucleic acids, and an increased efficiency of RNA synthesis because of enhanced recycling.</text>
</comment>
<comment type="subunit">
    <text evidence="1">RNAP is composed of a core of 2 alpha, a beta and a beta' subunits. The core is associated with a delta subunit and one of several sigma factors.</text>
</comment>
<comment type="similarity">
    <text evidence="1">Belongs to the RpoE family.</text>
</comment>
<dbReference type="EMBL" id="CP001015">
    <property type="protein sequence ID" value="ACF56139.1"/>
    <property type="molecule type" value="Genomic_DNA"/>
</dbReference>
<dbReference type="SMR" id="B5E1U3"/>
<dbReference type="KEGG" id="spx:SPG_0446"/>
<dbReference type="HOGENOM" id="CLU_116648_0_0_9"/>
<dbReference type="GO" id="GO:0000428">
    <property type="term" value="C:DNA-directed RNA polymerase complex"/>
    <property type="evidence" value="ECO:0007669"/>
    <property type="project" value="UniProtKB-KW"/>
</dbReference>
<dbReference type="GO" id="GO:0003899">
    <property type="term" value="F:DNA-directed RNA polymerase activity"/>
    <property type="evidence" value="ECO:0007669"/>
    <property type="project" value="UniProtKB-UniRule"/>
</dbReference>
<dbReference type="GO" id="GO:0006351">
    <property type="term" value="P:DNA-templated transcription"/>
    <property type="evidence" value="ECO:0007669"/>
    <property type="project" value="InterPro"/>
</dbReference>
<dbReference type="GO" id="GO:0006355">
    <property type="term" value="P:regulation of DNA-templated transcription"/>
    <property type="evidence" value="ECO:0007669"/>
    <property type="project" value="UniProtKB-UniRule"/>
</dbReference>
<dbReference type="Gene3D" id="1.10.10.1250">
    <property type="entry name" value="RNA polymerase, subunit delta, N-terminal domain"/>
    <property type="match status" value="1"/>
</dbReference>
<dbReference type="HAMAP" id="MF_00357">
    <property type="entry name" value="RNApol_bact_RpoE"/>
    <property type="match status" value="1"/>
</dbReference>
<dbReference type="InterPro" id="IPR007759">
    <property type="entry name" value="Asxl_HARE-HTH"/>
</dbReference>
<dbReference type="InterPro" id="IPR038087">
    <property type="entry name" value="RNAP_delta_N_dom_sf"/>
</dbReference>
<dbReference type="InterPro" id="IPR029757">
    <property type="entry name" value="RpoE"/>
</dbReference>
<dbReference type="NCBIfam" id="TIGR04567">
    <property type="entry name" value="RNAP_delt_lowGC"/>
    <property type="match status" value="1"/>
</dbReference>
<dbReference type="Pfam" id="PF05066">
    <property type="entry name" value="HARE-HTH"/>
    <property type="match status" value="1"/>
</dbReference>
<dbReference type="PROSITE" id="PS51913">
    <property type="entry name" value="HTH_HARE"/>
    <property type="match status" value="1"/>
</dbReference>
<gene>
    <name evidence="1" type="primary">rpoE</name>
    <name type="ordered locus">SPG_0446</name>
</gene>
<sequence length="195" mass="22125">MELEVFAGQEKSELSMIEVARAILELRGRDHEMHFSDLVNEIQNYLGTSNSDIREALPLFYTELNFDGSFISLGDNKWGLRSWYGVDEIDEEIIALEENDDDEVAPKAKKKRVNAFMDGDSDAIDYNADDPEDEDAYEADPALSYDDENPDDEKNEVEAYDAEINEIAPDDLGEDVDLNEDDDEFSDDDAETSEE</sequence>